<comment type="function">
    <text evidence="2">One of the shell proteins of the carboxysome, a polyhedral inclusion where RuBisCO (ribulose bisphosphate carboxylase, rbcL-rbcS) is sequestered. Assembles into hexamers which make sheets that form the facets of the polyhedral carboxysome. The hexamer central pore probably regulates metabolite flux.</text>
</comment>
<comment type="function">
    <text evidence="4 6 13 14">Probably the major shell protein of the carboxysome, a polyhedral inclusion where RuBisCO (ribulose bisphosphate carboxylase, rbcL-rbcS) is sequestered. The central pore probably regulates metabolite flux (PubMed:18292340). Hexamers make sheets that form the facets of the carboxysome (Probable) (PubMed:19844993).</text>
</comment>
<comment type="subunit">
    <text evidence="1 3 4 5 6 7 8">Homohexamer (PubMed:18292340, PubMed:19177356, PubMed:19844993, PubMed:24419393, PubMed:31603944). Interacts with full-length CcmM (PubMed:17993516). Forms mixed heterohexamers of all possible stoichiometries with CcmK2, which might form dodecamers. Only very weak interactions with CcmK3 and CcmK4 were seen (PubMed:31603944). Interacts with CcmN and CcmO in the carboxysome (By similarity).</text>
</comment>
<comment type="subcellular location">
    <subcellularLocation>
        <location evidence="2 12">Carboxysome</location>
    </subcellularLocation>
    <text evidence="11 12 13 14">This cyanobacterium makes beta-type carboxysomes (Probable). Forms walls in the polyhedral carboxysome (Probable).</text>
</comment>
<comment type="domain">
    <text evidence="5">The tight homohexamer forms a pore with an opening of about 5.0 Angstroms in diameter which is positively charged. Sulfate ions are bound in one crystal form in both the pore and between hexamers which may represent metabolite flux. The C-terminal flexible tail, which is the most variable part of CcmK proteins, seems to be involved in packing of hexamers in layers.</text>
</comment>
<comment type="similarity">
    <text evidence="2">Belongs to the bacterial microcompartments protein family. CcmK subfamily.</text>
</comment>
<keyword id="KW-0002">3D-structure</keyword>
<keyword id="KW-1283">Bacterial microcompartment</keyword>
<keyword id="KW-0120">Carbon dioxide fixation</keyword>
<keyword id="KW-1282">Carboxysome</keyword>
<keyword id="KW-0903">Direct protein sequencing</keyword>
<keyword id="KW-0602">Photosynthesis</keyword>
<keyword id="KW-1185">Reference proteome</keyword>
<sequence>MSIAVGMIETLGFPAVVEAADSMVKAARVTLVGYEKIGSGRVTVIVRGDVSEVQASVTAGIENIRRVNGGEVLSNHIIARPHENLEYVLPIRYTEAVEQFREIVNPSIIRR</sequence>
<protein>
    <recommendedName>
        <fullName evidence="10">Carboxysome shell protein CcmK1</fullName>
    </recommendedName>
    <alternativeName>
        <fullName>Carbon dioxide-concentrating mechanism protein CcmK1</fullName>
    </alternativeName>
</protein>
<gene>
    <name evidence="10" type="primary">ccmK1</name>
    <name type="ordered locus">sll1029</name>
</gene>
<feature type="initiator methionine" description="Removed" evidence="9">
    <location>
        <position position="1"/>
    </location>
</feature>
<feature type="chain" id="PRO_0000201506" description="Carboxysome shell protein CcmK1">
    <location>
        <begin position="2"/>
        <end position="111"/>
    </location>
</feature>
<feature type="domain" description="BMC" evidence="2">
    <location>
        <begin position="4"/>
        <end position="90"/>
    </location>
</feature>
<feature type="mutagenesis site" description="Alters hexamer layer packing." evidence="5">
    <location>
        <begin position="92"/>
        <end position="111"/>
    </location>
</feature>
<feature type="strand" evidence="18">
    <location>
        <begin position="4"/>
        <end position="12"/>
    </location>
</feature>
<feature type="helix" evidence="18">
    <location>
        <begin position="13"/>
        <end position="26"/>
    </location>
</feature>
<feature type="strand" evidence="18">
    <location>
        <begin position="27"/>
        <end position="36"/>
    </location>
</feature>
<feature type="strand" evidence="18">
    <location>
        <begin position="41"/>
        <end position="48"/>
    </location>
</feature>
<feature type="helix" evidence="18">
    <location>
        <begin position="50"/>
        <end position="64"/>
    </location>
</feature>
<feature type="strand" evidence="18">
    <location>
        <begin position="72"/>
        <end position="80"/>
    </location>
</feature>
<feature type="helix" evidence="18">
    <location>
        <begin position="83"/>
        <end position="87"/>
    </location>
</feature>
<accession>P72760</accession>
<reference key="1">
    <citation type="journal article" date="1996" name="DNA Res.">
        <title>Sequence analysis of the genome of the unicellular cyanobacterium Synechocystis sp. strain PCC6803. II. Sequence determination of the entire genome and assignment of potential protein-coding regions.</title>
        <authorList>
            <person name="Kaneko T."/>
            <person name="Sato S."/>
            <person name="Kotani H."/>
            <person name="Tanaka A."/>
            <person name="Asamizu E."/>
            <person name="Nakamura Y."/>
            <person name="Miyajima N."/>
            <person name="Hirosawa M."/>
            <person name="Sugiura M."/>
            <person name="Sasamoto S."/>
            <person name="Kimura T."/>
            <person name="Hosouchi T."/>
            <person name="Matsuno A."/>
            <person name="Muraki A."/>
            <person name="Nakazaki N."/>
            <person name="Naruo K."/>
            <person name="Okumura S."/>
            <person name="Shimpo S."/>
            <person name="Takeuchi C."/>
            <person name="Wada T."/>
            <person name="Watanabe A."/>
            <person name="Yamada M."/>
            <person name="Yasuda M."/>
            <person name="Tabata S."/>
        </authorList>
    </citation>
    <scope>NUCLEOTIDE SEQUENCE [LARGE SCALE GENOMIC DNA]</scope>
    <source>
        <strain>ATCC 27184 / PCC 6803 / Kazusa</strain>
    </source>
</reference>
<reference key="2">
    <citation type="journal article" date="1997" name="Electrophoresis">
        <title>Towards a proteome project of cyanobacterium Synechocystis sp. strain PCC6803: linking 130 protein spots with their respective genes.</title>
        <authorList>
            <person name="Sazuka T."/>
            <person name="Ohara O."/>
        </authorList>
    </citation>
    <scope>PROTEIN SEQUENCE OF 2-21</scope>
</reference>
<reference key="3">
    <citation type="journal article" date="2008" name="J. Bacteriol.">
        <title>A multiprotein bicarbonate dehydration complex essential to carboxysome function in cyanobacteria.</title>
        <authorList>
            <person name="Cot S.S."/>
            <person name="So A.K."/>
            <person name="Espie G.S."/>
        </authorList>
    </citation>
    <scope>INTERACTION WITH CCMM</scope>
    <source>
        <strain>ATCC 27184 / PCC 6803 / Kazusa</strain>
    </source>
</reference>
<reference key="4">
    <citation type="journal article" date="2009" name="Protein Sci.">
        <title>Two-dimensional crystals of carboxysome shell proteins recapitulate the hexagonal packing of three-dimensional crystals.</title>
        <authorList>
            <person name="Dryden K.A."/>
            <person name="Crowley C.S."/>
            <person name="Tanaka S."/>
            <person name="Yeates T.O."/>
            <person name="Yeager M."/>
        </authorList>
    </citation>
    <scope>FUNCTION</scope>
    <scope>TWO-DIMENSIONAL CRYSTALS</scope>
    <scope>SUBUNIT</scope>
    <source>
        <strain>ATCC 27184 / PCC 6803 / Kazusa</strain>
    </source>
</reference>
<reference key="5">
    <citation type="journal article" date="2019" name="PLoS ONE">
        <title>Occurrence and stability of hetero-hexamer associations formed by beta-carboxysome CcmK shell components.</title>
        <authorList>
            <person name="Garcia-Alles L.F."/>
            <person name="Root K."/>
            <person name="Maveyraud L."/>
            <person name="Aubry N."/>
            <person name="Lesniewska E."/>
            <person name="Mourey L."/>
            <person name="Zenobi R."/>
            <person name="Truan G."/>
        </authorList>
    </citation>
    <scope>SUBUNIT</scope>
    <source>
        <strain>ATCC 27184 / PCC 6803 / Kazusa</strain>
    </source>
</reference>
<reference evidence="15" key="6">
    <citation type="journal article" date="2008" name="Science">
        <title>Atomic-level models of the bacterial carboxysome shell.</title>
        <authorList>
            <person name="Tanaka S."/>
            <person name="Kerfeld C.A."/>
            <person name="Sawaya M.R."/>
            <person name="Cai F."/>
            <person name="Heinhorst S."/>
            <person name="Cannon G.C."/>
            <person name="Yeates T.O."/>
        </authorList>
    </citation>
    <scope>X-RAY CRYSTALLOGRAPHY (2.00 ANGSTROMS)</scope>
    <scope>FUNCTION</scope>
    <scope>SUBUNIT</scope>
    <scope>SUBCELLULAR LOCATION</scope>
    <source>
        <strain>ATCC 27184 / PCC 6803 / Kazusa</strain>
    </source>
</reference>
<reference evidence="15 16" key="7">
    <citation type="journal article" date="2009" name="Protein Sci.">
        <title>Insights from multiple structures of the shell proteins from the beta-carboxysome.</title>
        <authorList>
            <person name="Tanaka S."/>
            <person name="Sawaya M.R."/>
            <person name="Phillips M."/>
            <person name="Yeates T.O."/>
        </authorList>
    </citation>
    <scope>X-RAY CRYSTALLOGRAPHY (2.00 ANGSTROMS)</scope>
    <scope>X-RAY CRYSTALLOGRAPHY (2.28 ANGSTROMS) OF 1-91</scope>
    <scope>SUBUNIT</scope>
    <scope>DOMAIN</scope>
    <scope>MUTAGENESIS OF 92-ARG--ARG-111</scope>
    <source>
        <strain>ATCC 27184 / PCC 6803 / Kazusa</strain>
    </source>
</reference>
<reference evidence="17" key="8">
    <citation type="journal article" date="2014" name="Acta Crystallogr. D">
        <title>A challenging interpretation of a hexagonally layered protein structure.</title>
        <authorList>
            <person name="Thompson M.C."/>
            <person name="Yeates T.O."/>
        </authorList>
    </citation>
    <scope>X-RAY CRYSTALLOGRAPHY (1.60 ANGSTROMS) OF 1-91</scope>
    <scope>SUBUNIT</scope>
    <source>
        <strain>ATCC 27184 / PCC 6803 / Kazusa</strain>
    </source>
</reference>
<dbReference type="EMBL" id="BA000022">
    <property type="protein sequence ID" value="BAA16775.1"/>
    <property type="molecule type" value="Genomic_DNA"/>
</dbReference>
<dbReference type="PIR" id="S74623">
    <property type="entry name" value="S74623"/>
</dbReference>
<dbReference type="PDB" id="3BN4">
    <property type="method" value="X-ray"/>
    <property type="resolution" value="2.00 A"/>
    <property type="chains" value="A/B/C/D/E/F=1-111"/>
</dbReference>
<dbReference type="PDB" id="3DN9">
    <property type="method" value="X-ray"/>
    <property type="resolution" value="2.28 A"/>
    <property type="chains" value="A/B/C/D/E/F=1-91"/>
</dbReference>
<dbReference type="PDB" id="4LIW">
    <property type="method" value="X-ray"/>
    <property type="resolution" value="1.60 A"/>
    <property type="chains" value="A/B=1-91"/>
</dbReference>
<dbReference type="PDB" id="9IV3">
    <property type="method" value="X-ray"/>
    <property type="resolution" value="2.95 A"/>
    <property type="chains" value="A/B/C/D/E/F=1-111"/>
</dbReference>
<dbReference type="PDB" id="9IV7">
    <property type="method" value="X-ray"/>
    <property type="resolution" value="2.50 A"/>
    <property type="chains" value="B/C/F/H=1-111"/>
</dbReference>
<dbReference type="PDBsum" id="3BN4"/>
<dbReference type="PDBsum" id="3DN9"/>
<dbReference type="PDBsum" id="4LIW"/>
<dbReference type="PDBsum" id="9IV3"/>
<dbReference type="PDBsum" id="9IV7"/>
<dbReference type="SMR" id="P72760"/>
<dbReference type="IntAct" id="P72760">
    <property type="interactions" value="3"/>
</dbReference>
<dbReference type="STRING" id="1148.gene:10497631"/>
<dbReference type="TCDB" id="1.S.1.1.7">
    <property type="family name" value="the bacterial microcompartment shell/pore-forming protein-1 (bmc-sp1) family"/>
</dbReference>
<dbReference type="PaxDb" id="1148-1651848"/>
<dbReference type="EnsemblBacteria" id="BAA16775">
    <property type="protein sequence ID" value="BAA16775"/>
    <property type="gene ID" value="BAA16775"/>
</dbReference>
<dbReference type="KEGG" id="syn:sll1029"/>
<dbReference type="eggNOG" id="COG4577">
    <property type="taxonomic scope" value="Bacteria"/>
</dbReference>
<dbReference type="InParanoid" id="P72760"/>
<dbReference type="PhylomeDB" id="P72760"/>
<dbReference type="EvolutionaryTrace" id="P72760"/>
<dbReference type="Proteomes" id="UP000001425">
    <property type="component" value="Chromosome"/>
</dbReference>
<dbReference type="GO" id="GO:0031470">
    <property type="term" value="C:carboxysome"/>
    <property type="evidence" value="ECO:0000314"/>
    <property type="project" value="UniProtKB"/>
</dbReference>
<dbReference type="GO" id="GO:0043886">
    <property type="term" value="F:structural constituent of carboxysome shell"/>
    <property type="evidence" value="ECO:0000314"/>
    <property type="project" value="UniProtKB"/>
</dbReference>
<dbReference type="GO" id="GO:0015977">
    <property type="term" value="P:carbon fixation"/>
    <property type="evidence" value="ECO:0007669"/>
    <property type="project" value="UniProtKB-UniRule"/>
</dbReference>
<dbReference type="GO" id="GO:0015979">
    <property type="term" value="P:photosynthesis"/>
    <property type="evidence" value="ECO:0007669"/>
    <property type="project" value="UniProtKB-KW"/>
</dbReference>
<dbReference type="CDD" id="cd07057">
    <property type="entry name" value="BMC_CcmK"/>
    <property type="match status" value="1"/>
</dbReference>
<dbReference type="FunFam" id="3.30.70.1710:FF:000001">
    <property type="entry name" value="Ethanolamine utilization protein EutM"/>
    <property type="match status" value="1"/>
</dbReference>
<dbReference type="Gene3D" id="3.30.70.1710">
    <property type="match status" value="1"/>
</dbReference>
<dbReference type="HAMAP" id="MF_00854">
    <property type="entry name" value="CcmK"/>
    <property type="match status" value="1"/>
</dbReference>
<dbReference type="InterPro" id="IPR020808">
    <property type="entry name" value="Bact_microcomp_CS"/>
</dbReference>
<dbReference type="InterPro" id="IPR000249">
    <property type="entry name" value="BMC_dom"/>
</dbReference>
<dbReference type="InterPro" id="IPR050575">
    <property type="entry name" value="BMC_shell"/>
</dbReference>
<dbReference type="InterPro" id="IPR046380">
    <property type="entry name" value="CcmK"/>
</dbReference>
<dbReference type="InterPro" id="IPR037233">
    <property type="entry name" value="CcmK-like_sf"/>
</dbReference>
<dbReference type="InterPro" id="IPR044872">
    <property type="entry name" value="CcmK/CsoS1_BMC"/>
</dbReference>
<dbReference type="PANTHER" id="PTHR33941:SF13">
    <property type="entry name" value="CARBOXYSOME SHELL PROTEIN CCMK4"/>
    <property type="match status" value="1"/>
</dbReference>
<dbReference type="PANTHER" id="PTHR33941">
    <property type="entry name" value="PROPANEDIOL UTILIZATION PROTEIN PDUA"/>
    <property type="match status" value="1"/>
</dbReference>
<dbReference type="Pfam" id="PF00936">
    <property type="entry name" value="BMC"/>
    <property type="match status" value="1"/>
</dbReference>
<dbReference type="SMART" id="SM00877">
    <property type="entry name" value="BMC"/>
    <property type="match status" value="1"/>
</dbReference>
<dbReference type="SUPFAM" id="SSF143414">
    <property type="entry name" value="CcmK-like"/>
    <property type="match status" value="1"/>
</dbReference>
<dbReference type="PROSITE" id="PS01139">
    <property type="entry name" value="BMC_1"/>
    <property type="match status" value="1"/>
</dbReference>
<dbReference type="PROSITE" id="PS51930">
    <property type="entry name" value="BMC_2"/>
    <property type="match status" value="1"/>
</dbReference>
<organism>
    <name type="scientific">Synechocystis sp. (strain ATCC 27184 / PCC 6803 / Kazusa)</name>
    <dbReference type="NCBI Taxonomy" id="1111708"/>
    <lineage>
        <taxon>Bacteria</taxon>
        <taxon>Bacillati</taxon>
        <taxon>Cyanobacteriota</taxon>
        <taxon>Cyanophyceae</taxon>
        <taxon>Synechococcales</taxon>
        <taxon>Merismopediaceae</taxon>
        <taxon>Synechocystis</taxon>
    </lineage>
</organism>
<evidence type="ECO:0000250" key="1">
    <source>
        <dbReference type="UniProtKB" id="Q03511"/>
    </source>
</evidence>
<evidence type="ECO:0000255" key="2">
    <source>
        <dbReference type="HAMAP-Rule" id="MF_00854"/>
    </source>
</evidence>
<evidence type="ECO:0000269" key="3">
    <source>
    </source>
</evidence>
<evidence type="ECO:0000269" key="4">
    <source>
    </source>
</evidence>
<evidence type="ECO:0000269" key="5">
    <source>
    </source>
</evidence>
<evidence type="ECO:0000269" key="6">
    <source>
    </source>
</evidence>
<evidence type="ECO:0000269" key="7">
    <source>
    </source>
</evidence>
<evidence type="ECO:0000269" key="8">
    <source>
    </source>
</evidence>
<evidence type="ECO:0000269" key="9">
    <source>
    </source>
</evidence>
<evidence type="ECO:0000303" key="10">
    <source>
    </source>
</evidence>
<evidence type="ECO:0000305" key="11">
    <source>
    </source>
</evidence>
<evidence type="ECO:0000305" key="12">
    <source>
    </source>
</evidence>
<evidence type="ECO:0000305" key="13">
    <source>
    </source>
</evidence>
<evidence type="ECO:0000305" key="14">
    <source>
    </source>
</evidence>
<evidence type="ECO:0007744" key="15">
    <source>
        <dbReference type="PDB" id="3BN4"/>
    </source>
</evidence>
<evidence type="ECO:0007744" key="16">
    <source>
        <dbReference type="PDB" id="3DN9"/>
    </source>
</evidence>
<evidence type="ECO:0007744" key="17">
    <source>
        <dbReference type="PDB" id="4LIW"/>
    </source>
</evidence>
<evidence type="ECO:0007829" key="18">
    <source>
        <dbReference type="PDB" id="4LIW"/>
    </source>
</evidence>
<name>CCMK1_SYNY3</name>
<proteinExistence type="evidence at protein level"/>